<evidence type="ECO:0000255" key="1">
    <source>
        <dbReference type="HAMAP-Rule" id="MF_00060"/>
    </source>
</evidence>
<organism>
    <name type="scientific">Prochlorococcus marinus (strain MIT 9211)</name>
    <dbReference type="NCBI Taxonomy" id="93059"/>
    <lineage>
        <taxon>Bacteria</taxon>
        <taxon>Bacillati</taxon>
        <taxon>Cyanobacteriota</taxon>
        <taxon>Cyanophyceae</taxon>
        <taxon>Synechococcales</taxon>
        <taxon>Prochlorococcaceae</taxon>
        <taxon>Prochlorococcus</taxon>
    </lineage>
</organism>
<reference key="1">
    <citation type="journal article" date="2007" name="PLoS Genet.">
        <title>Patterns and implications of gene gain and loss in the evolution of Prochlorococcus.</title>
        <authorList>
            <person name="Kettler G.C."/>
            <person name="Martiny A.C."/>
            <person name="Huang K."/>
            <person name="Zucker J."/>
            <person name="Coleman M.L."/>
            <person name="Rodrigue S."/>
            <person name="Chen F."/>
            <person name="Lapidus A."/>
            <person name="Ferriera S."/>
            <person name="Johnson J."/>
            <person name="Steglich C."/>
            <person name="Church G.M."/>
            <person name="Richardson P."/>
            <person name="Chisholm S.W."/>
        </authorList>
    </citation>
    <scope>NUCLEOTIDE SEQUENCE [LARGE SCALE GENOMIC DNA]</scope>
    <source>
        <strain>MIT 9211</strain>
    </source>
</reference>
<keyword id="KW-0963">Cytoplasm</keyword>
<keyword id="KW-0378">Hydrolase</keyword>
<keyword id="KW-0479">Metal-binding</keyword>
<keyword id="KW-0547">Nucleotide-binding</keyword>
<keyword id="KW-1185">Reference proteome</keyword>
<feature type="chain" id="PRO_1000092025" description="5'-nucleotidase SurE">
    <location>
        <begin position="1"/>
        <end position="269"/>
    </location>
</feature>
<feature type="binding site" evidence="1">
    <location>
        <position position="11"/>
    </location>
    <ligand>
        <name>a divalent metal cation</name>
        <dbReference type="ChEBI" id="CHEBI:60240"/>
    </ligand>
</feature>
<feature type="binding site" evidence="1">
    <location>
        <position position="12"/>
    </location>
    <ligand>
        <name>a divalent metal cation</name>
        <dbReference type="ChEBI" id="CHEBI:60240"/>
    </ligand>
</feature>
<feature type="binding site" evidence="1">
    <location>
        <position position="43"/>
    </location>
    <ligand>
        <name>a divalent metal cation</name>
        <dbReference type="ChEBI" id="CHEBI:60240"/>
    </ligand>
</feature>
<feature type="binding site" evidence="1">
    <location>
        <position position="101"/>
    </location>
    <ligand>
        <name>a divalent metal cation</name>
        <dbReference type="ChEBI" id="CHEBI:60240"/>
    </ligand>
</feature>
<name>SURE_PROM4</name>
<sequence>MKPLKILISNDDGVFAEGIRTLAGAAAFRGHQVTVVCPDQERSATGHGLTLHSPIRAEKANELFGKGVSAWGCNGTPADCVKLALNEILPEKPDLILSGINHGPNLGTDIFCSGTVAAALEGTLAGIPAIAISIASFQWRDFSFASQLALEIAEEALTKNWPQKLLLNINTPPCKSSEMGQLGWTRLSIRQYEEQFTRRIDPRGNPYYWMAGNAVKDIDSAGDGPSQWPSDVAQIESNSPSITPIEPDLFWRGNISDLPAINLKNYFSR</sequence>
<protein>
    <recommendedName>
        <fullName evidence="1">5'-nucleotidase SurE</fullName>
        <ecNumber evidence="1">3.1.3.5</ecNumber>
    </recommendedName>
    <alternativeName>
        <fullName evidence="1">Nucleoside 5'-monophosphate phosphohydrolase</fullName>
    </alternativeName>
</protein>
<proteinExistence type="inferred from homology"/>
<comment type="function">
    <text evidence="1">Nucleotidase that shows phosphatase activity on nucleoside 5'-monophosphates.</text>
</comment>
<comment type="catalytic activity">
    <reaction evidence="1">
        <text>a ribonucleoside 5'-phosphate + H2O = a ribonucleoside + phosphate</text>
        <dbReference type="Rhea" id="RHEA:12484"/>
        <dbReference type="ChEBI" id="CHEBI:15377"/>
        <dbReference type="ChEBI" id="CHEBI:18254"/>
        <dbReference type="ChEBI" id="CHEBI:43474"/>
        <dbReference type="ChEBI" id="CHEBI:58043"/>
        <dbReference type="EC" id="3.1.3.5"/>
    </reaction>
</comment>
<comment type="cofactor">
    <cofactor evidence="1">
        <name>a divalent metal cation</name>
        <dbReference type="ChEBI" id="CHEBI:60240"/>
    </cofactor>
    <text evidence="1">Binds 1 divalent metal cation per subunit.</text>
</comment>
<comment type="subcellular location">
    <subcellularLocation>
        <location evidence="1">Cytoplasm</location>
    </subcellularLocation>
</comment>
<comment type="similarity">
    <text evidence="1">Belongs to the SurE nucleotidase family.</text>
</comment>
<dbReference type="EC" id="3.1.3.5" evidence="1"/>
<dbReference type="EMBL" id="CP000878">
    <property type="protein sequence ID" value="ABX09246.1"/>
    <property type="molecule type" value="Genomic_DNA"/>
</dbReference>
<dbReference type="RefSeq" id="WP_012195867.1">
    <property type="nucleotide sequence ID" value="NC_009976.1"/>
</dbReference>
<dbReference type="SMR" id="A9BBN4"/>
<dbReference type="STRING" id="93059.P9211_13151"/>
<dbReference type="KEGG" id="pmj:P9211_13151"/>
<dbReference type="eggNOG" id="COG0496">
    <property type="taxonomic scope" value="Bacteria"/>
</dbReference>
<dbReference type="HOGENOM" id="CLU_045192_1_3_3"/>
<dbReference type="OrthoDB" id="9780815at2"/>
<dbReference type="Proteomes" id="UP000000788">
    <property type="component" value="Chromosome"/>
</dbReference>
<dbReference type="GO" id="GO:0005737">
    <property type="term" value="C:cytoplasm"/>
    <property type="evidence" value="ECO:0007669"/>
    <property type="project" value="UniProtKB-SubCell"/>
</dbReference>
<dbReference type="GO" id="GO:0008254">
    <property type="term" value="F:3'-nucleotidase activity"/>
    <property type="evidence" value="ECO:0007669"/>
    <property type="project" value="TreeGrafter"/>
</dbReference>
<dbReference type="GO" id="GO:0008253">
    <property type="term" value="F:5'-nucleotidase activity"/>
    <property type="evidence" value="ECO:0007669"/>
    <property type="project" value="UniProtKB-UniRule"/>
</dbReference>
<dbReference type="GO" id="GO:0004309">
    <property type="term" value="F:exopolyphosphatase activity"/>
    <property type="evidence" value="ECO:0007669"/>
    <property type="project" value="TreeGrafter"/>
</dbReference>
<dbReference type="GO" id="GO:0046872">
    <property type="term" value="F:metal ion binding"/>
    <property type="evidence" value="ECO:0007669"/>
    <property type="project" value="UniProtKB-UniRule"/>
</dbReference>
<dbReference type="GO" id="GO:0000166">
    <property type="term" value="F:nucleotide binding"/>
    <property type="evidence" value="ECO:0007669"/>
    <property type="project" value="UniProtKB-KW"/>
</dbReference>
<dbReference type="Gene3D" id="3.40.1210.10">
    <property type="entry name" value="Survival protein SurE-like phosphatase/nucleotidase"/>
    <property type="match status" value="1"/>
</dbReference>
<dbReference type="HAMAP" id="MF_00060">
    <property type="entry name" value="SurE"/>
    <property type="match status" value="1"/>
</dbReference>
<dbReference type="InterPro" id="IPR030048">
    <property type="entry name" value="SurE"/>
</dbReference>
<dbReference type="InterPro" id="IPR002828">
    <property type="entry name" value="SurE-like_Pase/nucleotidase"/>
</dbReference>
<dbReference type="InterPro" id="IPR036523">
    <property type="entry name" value="SurE-like_sf"/>
</dbReference>
<dbReference type="NCBIfam" id="NF001490">
    <property type="entry name" value="PRK00346.1-4"/>
    <property type="match status" value="1"/>
</dbReference>
<dbReference type="NCBIfam" id="NF001492">
    <property type="entry name" value="PRK00346.2-2"/>
    <property type="match status" value="1"/>
</dbReference>
<dbReference type="NCBIfam" id="TIGR00087">
    <property type="entry name" value="surE"/>
    <property type="match status" value="1"/>
</dbReference>
<dbReference type="PANTHER" id="PTHR30457">
    <property type="entry name" value="5'-NUCLEOTIDASE SURE"/>
    <property type="match status" value="1"/>
</dbReference>
<dbReference type="PANTHER" id="PTHR30457:SF12">
    <property type="entry name" value="5'_3'-NUCLEOTIDASE SURE"/>
    <property type="match status" value="1"/>
</dbReference>
<dbReference type="Pfam" id="PF01975">
    <property type="entry name" value="SurE"/>
    <property type="match status" value="1"/>
</dbReference>
<dbReference type="SUPFAM" id="SSF64167">
    <property type="entry name" value="SurE-like"/>
    <property type="match status" value="1"/>
</dbReference>
<gene>
    <name evidence="1" type="primary">surE</name>
    <name type="ordered locus">P9211_13151</name>
</gene>
<accession>A9BBN4</accession>